<sequence length="349" mass="39310">MNTLLLHCRPGFEGEVCAEISEHAAILEVAGYAKARPDSACAEFICSEPGGAERLMRRLRFADLIFPRQWARGDYLQLPETDRISVLLAHLADYPVCSSLWLEVLDTNDGKELSNFCRKFEAPLRKALVKAGRLDEQGKGPRLLLTFKSGREVFVGIAEANNSALWPMGIPRLKFPRQAPSRSTLKLEEAWHHFIPREQWDTRLAAGMTGVDLGAAPGGWTWQMVNRHIKVSAVDNGPMNADLMDSGLVEHFRADGFTFRPKRPVDWMVCDIVEKPARNAALLETWIGEGLCREAVVNLKLPMKQRYAEVKRLLERIADGLAERGVKASIGCKQLYHDREEVTCHLRRL</sequence>
<organism>
    <name type="scientific">Stutzerimonas stutzeri (strain A1501)</name>
    <name type="common">Pseudomonas stutzeri</name>
    <dbReference type="NCBI Taxonomy" id="379731"/>
    <lineage>
        <taxon>Bacteria</taxon>
        <taxon>Pseudomonadati</taxon>
        <taxon>Pseudomonadota</taxon>
        <taxon>Gammaproteobacteria</taxon>
        <taxon>Pseudomonadales</taxon>
        <taxon>Pseudomonadaceae</taxon>
        <taxon>Stutzerimonas</taxon>
    </lineage>
</organism>
<comment type="function">
    <text evidence="1">Catalyzes the 2'-O-methylation at nucleotide C2498 in 23S rRNA.</text>
</comment>
<comment type="catalytic activity">
    <reaction evidence="1">
        <text>cytidine(2498) in 23S rRNA + S-adenosyl-L-methionine = 2'-O-methylcytidine(2498) in 23S rRNA + S-adenosyl-L-homocysteine + H(+)</text>
        <dbReference type="Rhea" id="RHEA:42788"/>
        <dbReference type="Rhea" id="RHEA-COMP:10244"/>
        <dbReference type="Rhea" id="RHEA-COMP:10245"/>
        <dbReference type="ChEBI" id="CHEBI:15378"/>
        <dbReference type="ChEBI" id="CHEBI:57856"/>
        <dbReference type="ChEBI" id="CHEBI:59789"/>
        <dbReference type="ChEBI" id="CHEBI:74495"/>
        <dbReference type="ChEBI" id="CHEBI:82748"/>
        <dbReference type="EC" id="2.1.1.186"/>
    </reaction>
</comment>
<comment type="subunit">
    <text evidence="1">Monomer.</text>
</comment>
<comment type="subcellular location">
    <subcellularLocation>
        <location evidence="1">Cytoplasm</location>
    </subcellularLocation>
</comment>
<comment type="similarity">
    <text evidence="1">Belongs to the class I-like SAM-binding methyltransferase superfamily. RNA methyltransferase RlmE family. RlmM subfamily.</text>
</comment>
<comment type="sequence caution" evidence="2">
    <conflict type="erroneous initiation">
        <sequence resource="EMBL-CDS" id="ABP79521"/>
    </conflict>
</comment>
<evidence type="ECO:0000255" key="1">
    <source>
        <dbReference type="HAMAP-Rule" id="MF_01551"/>
    </source>
</evidence>
<evidence type="ECO:0000305" key="2"/>
<reference key="1">
    <citation type="journal article" date="2008" name="Proc. Natl. Acad. Sci. U.S.A.">
        <title>Nitrogen fixation island and rhizosphere competence traits in the genome of root-associated Pseudomonas stutzeri A1501.</title>
        <authorList>
            <person name="Yan Y."/>
            <person name="Yang J."/>
            <person name="Dou Y."/>
            <person name="Chen M."/>
            <person name="Ping S."/>
            <person name="Peng J."/>
            <person name="Lu W."/>
            <person name="Zhang W."/>
            <person name="Yao Z."/>
            <person name="Li H."/>
            <person name="Liu W."/>
            <person name="He S."/>
            <person name="Geng L."/>
            <person name="Zhang X."/>
            <person name="Yang F."/>
            <person name="Yu H."/>
            <person name="Zhan Y."/>
            <person name="Li D."/>
            <person name="Lin Z."/>
            <person name="Wang Y."/>
            <person name="Elmerich C."/>
            <person name="Lin M."/>
            <person name="Jin Q."/>
        </authorList>
    </citation>
    <scope>NUCLEOTIDE SEQUENCE [LARGE SCALE GENOMIC DNA]</scope>
    <source>
        <strain>A1501</strain>
    </source>
</reference>
<proteinExistence type="inferred from homology"/>
<dbReference type="EC" id="2.1.1.186" evidence="1"/>
<dbReference type="EMBL" id="CP000304">
    <property type="protein sequence ID" value="ABP79521.1"/>
    <property type="status" value="ALT_INIT"/>
    <property type="molecule type" value="Genomic_DNA"/>
</dbReference>
<dbReference type="RefSeq" id="WP_011912998.1">
    <property type="nucleotide sequence ID" value="NC_009434.1"/>
</dbReference>
<dbReference type="SMR" id="A4VKM0"/>
<dbReference type="KEGG" id="psa:PST_1847"/>
<dbReference type="eggNOG" id="COG2933">
    <property type="taxonomic scope" value="Bacteria"/>
</dbReference>
<dbReference type="HOGENOM" id="CLU_043780_0_0_6"/>
<dbReference type="Proteomes" id="UP000000233">
    <property type="component" value="Chromosome"/>
</dbReference>
<dbReference type="GO" id="GO:0005737">
    <property type="term" value="C:cytoplasm"/>
    <property type="evidence" value="ECO:0007669"/>
    <property type="project" value="UniProtKB-SubCell"/>
</dbReference>
<dbReference type="GO" id="GO:0008757">
    <property type="term" value="F:S-adenosylmethionine-dependent methyltransferase activity"/>
    <property type="evidence" value="ECO:0007669"/>
    <property type="project" value="UniProtKB-UniRule"/>
</dbReference>
<dbReference type="GO" id="GO:0032259">
    <property type="term" value="P:methylation"/>
    <property type="evidence" value="ECO:0007669"/>
    <property type="project" value="UniProtKB-KW"/>
</dbReference>
<dbReference type="GO" id="GO:0006364">
    <property type="term" value="P:rRNA processing"/>
    <property type="evidence" value="ECO:0007669"/>
    <property type="project" value="UniProtKB-UniRule"/>
</dbReference>
<dbReference type="Gene3D" id="3.30.2300.20">
    <property type="match status" value="1"/>
</dbReference>
<dbReference type="Gene3D" id="3.30.70.2810">
    <property type="match status" value="1"/>
</dbReference>
<dbReference type="Gene3D" id="3.40.50.150">
    <property type="entry name" value="Vaccinia Virus protein VP39"/>
    <property type="match status" value="1"/>
</dbReference>
<dbReference type="HAMAP" id="MF_01551">
    <property type="entry name" value="23SrRNA_methyltr_M"/>
    <property type="match status" value="1"/>
</dbReference>
<dbReference type="InterPro" id="IPR040739">
    <property type="entry name" value="RlmM_FDX"/>
</dbReference>
<dbReference type="InterPro" id="IPR048646">
    <property type="entry name" value="RlmM_THUMP-like"/>
</dbReference>
<dbReference type="InterPro" id="IPR002877">
    <property type="entry name" value="RNA_MeTrfase_FtsJ_dom"/>
</dbReference>
<dbReference type="InterPro" id="IPR011224">
    <property type="entry name" value="rRNA_MeTrfase_M"/>
</dbReference>
<dbReference type="InterPro" id="IPR029063">
    <property type="entry name" value="SAM-dependent_MTases_sf"/>
</dbReference>
<dbReference type="NCBIfam" id="NF008734">
    <property type="entry name" value="PRK11760.1"/>
    <property type="match status" value="1"/>
</dbReference>
<dbReference type="PANTHER" id="PTHR37524">
    <property type="entry name" value="RIBOSOMAL RNA LARGE SUBUNIT METHYLTRANSFERASE M"/>
    <property type="match status" value="1"/>
</dbReference>
<dbReference type="PANTHER" id="PTHR37524:SF2">
    <property type="entry name" value="RIBOSOMAL RNA METHYLTRANSFERASE FTSJ DOMAIN-CONTAINING PROTEIN"/>
    <property type="match status" value="1"/>
</dbReference>
<dbReference type="Pfam" id="PF01728">
    <property type="entry name" value="FtsJ"/>
    <property type="match status" value="1"/>
</dbReference>
<dbReference type="Pfam" id="PF18125">
    <property type="entry name" value="RlmM_FDX"/>
    <property type="match status" value="1"/>
</dbReference>
<dbReference type="Pfam" id="PF21239">
    <property type="entry name" value="RLMM_N"/>
    <property type="match status" value="1"/>
</dbReference>
<dbReference type="PIRSF" id="PIRSF028774">
    <property type="entry name" value="UCP028774"/>
    <property type="match status" value="1"/>
</dbReference>
<dbReference type="SUPFAM" id="SSF53335">
    <property type="entry name" value="S-adenosyl-L-methionine-dependent methyltransferases"/>
    <property type="match status" value="1"/>
</dbReference>
<gene>
    <name evidence="1" type="primary">rlmM</name>
    <name type="ordered locus">PST_1847</name>
</gene>
<keyword id="KW-0963">Cytoplasm</keyword>
<keyword id="KW-0489">Methyltransferase</keyword>
<keyword id="KW-1185">Reference proteome</keyword>
<keyword id="KW-0698">rRNA processing</keyword>
<keyword id="KW-0949">S-adenosyl-L-methionine</keyword>
<keyword id="KW-0808">Transferase</keyword>
<name>RLMM_STUS1</name>
<accession>A4VKM0</accession>
<protein>
    <recommendedName>
        <fullName evidence="1">Ribosomal RNA large subunit methyltransferase M</fullName>
        <ecNumber evidence="1">2.1.1.186</ecNumber>
    </recommendedName>
    <alternativeName>
        <fullName evidence="1">23S rRNA (cytidine2498-2'-O)-methyltransferase</fullName>
    </alternativeName>
    <alternativeName>
        <fullName evidence="1">23S rRNA 2'-O-ribose methyltransferase RlmM</fullName>
    </alternativeName>
</protein>
<feature type="chain" id="PRO_0000314530" description="Ribosomal RNA large subunit methyltransferase M">
    <location>
        <begin position="1"/>
        <end position="349"/>
    </location>
</feature>
<feature type="active site" description="Proton acceptor" evidence="1">
    <location>
        <position position="300"/>
    </location>
</feature>
<feature type="binding site" evidence="1">
    <location>
        <position position="183"/>
    </location>
    <ligand>
        <name>S-adenosyl-L-methionine</name>
        <dbReference type="ChEBI" id="CHEBI:59789"/>
    </ligand>
</feature>
<feature type="binding site" evidence="1">
    <location>
        <begin position="216"/>
        <end position="219"/>
    </location>
    <ligand>
        <name>S-adenosyl-L-methionine</name>
        <dbReference type="ChEBI" id="CHEBI:59789"/>
    </ligand>
</feature>
<feature type="binding site" evidence="1">
    <location>
        <position position="235"/>
    </location>
    <ligand>
        <name>S-adenosyl-L-methionine</name>
        <dbReference type="ChEBI" id="CHEBI:59789"/>
    </ligand>
</feature>
<feature type="binding site" evidence="1">
    <location>
        <position position="255"/>
    </location>
    <ligand>
        <name>S-adenosyl-L-methionine</name>
        <dbReference type="ChEBI" id="CHEBI:59789"/>
    </ligand>
</feature>
<feature type="binding site" evidence="1">
    <location>
        <position position="271"/>
    </location>
    <ligand>
        <name>S-adenosyl-L-methionine</name>
        <dbReference type="ChEBI" id="CHEBI:59789"/>
    </ligand>
</feature>